<dbReference type="EMBL" id="BA000052">
    <property type="protein sequence ID" value="BAE60973.1"/>
    <property type="molecule type" value="Genomic_DNA"/>
</dbReference>
<dbReference type="RefSeq" id="XP_001727812.1">
    <property type="nucleotide sequence ID" value="XM_001727760.2"/>
</dbReference>
<dbReference type="SMR" id="Q2UBU2"/>
<dbReference type="STRING" id="510516.Q2UBU2"/>
<dbReference type="EnsemblFungi" id="BAE60973">
    <property type="protein sequence ID" value="BAE60973"/>
    <property type="gene ID" value="AO090012000864"/>
</dbReference>
<dbReference type="GeneID" id="5988286"/>
<dbReference type="KEGG" id="aor:AO090012000864"/>
<dbReference type="VEuPathDB" id="FungiDB:AO090012000864"/>
<dbReference type="HOGENOM" id="CLU_004372_3_1_1"/>
<dbReference type="OMA" id="RGSWDGD"/>
<dbReference type="OrthoDB" id="62397at5052"/>
<dbReference type="Proteomes" id="UP000006564">
    <property type="component" value="Chromosome 4"/>
</dbReference>
<dbReference type="GO" id="GO:0000785">
    <property type="term" value="C:chromatin"/>
    <property type="evidence" value="ECO:0007669"/>
    <property type="project" value="TreeGrafter"/>
</dbReference>
<dbReference type="GO" id="GO:0000417">
    <property type="term" value="C:HIR complex"/>
    <property type="evidence" value="ECO:0007669"/>
    <property type="project" value="EnsemblFungi"/>
</dbReference>
<dbReference type="GO" id="GO:0005634">
    <property type="term" value="C:nucleus"/>
    <property type="evidence" value="ECO:0007669"/>
    <property type="project" value="UniProtKB-SubCell"/>
</dbReference>
<dbReference type="GO" id="GO:0031491">
    <property type="term" value="F:nucleosome binding"/>
    <property type="evidence" value="ECO:0007669"/>
    <property type="project" value="TreeGrafter"/>
</dbReference>
<dbReference type="GO" id="GO:0006338">
    <property type="term" value="P:chromatin remodeling"/>
    <property type="evidence" value="ECO:0007669"/>
    <property type="project" value="InterPro"/>
</dbReference>
<dbReference type="GO" id="GO:0006351">
    <property type="term" value="P:DNA-templated transcription"/>
    <property type="evidence" value="ECO:0007669"/>
    <property type="project" value="InterPro"/>
</dbReference>
<dbReference type="GO" id="GO:0006355">
    <property type="term" value="P:regulation of DNA-templated transcription"/>
    <property type="evidence" value="ECO:0007669"/>
    <property type="project" value="InterPro"/>
</dbReference>
<dbReference type="CDD" id="cd00200">
    <property type="entry name" value="WD40"/>
    <property type="match status" value="1"/>
</dbReference>
<dbReference type="FunFam" id="2.130.10.10:FF:000290">
    <property type="entry name" value="Protein HIR"/>
    <property type="match status" value="1"/>
</dbReference>
<dbReference type="FunFam" id="2.130.10.10:FF:001557">
    <property type="entry name" value="Protein HIR"/>
    <property type="match status" value="1"/>
</dbReference>
<dbReference type="Gene3D" id="2.130.10.10">
    <property type="entry name" value="YVTN repeat-like/Quinoprotein amine dehydrogenase"/>
    <property type="match status" value="2"/>
</dbReference>
<dbReference type="InterPro" id="IPR055410">
    <property type="entry name" value="CAF1B_HIR1_beta-prop"/>
</dbReference>
<dbReference type="InterPro" id="IPR031120">
    <property type="entry name" value="HIR1-like"/>
</dbReference>
<dbReference type="InterPro" id="IPR011494">
    <property type="entry name" value="HIRA-like_C"/>
</dbReference>
<dbReference type="InterPro" id="IPR019015">
    <property type="entry name" value="HIRA_B_motif"/>
</dbReference>
<dbReference type="InterPro" id="IPR015943">
    <property type="entry name" value="WD40/YVTN_repeat-like_dom_sf"/>
</dbReference>
<dbReference type="InterPro" id="IPR036322">
    <property type="entry name" value="WD40_repeat_dom_sf"/>
</dbReference>
<dbReference type="InterPro" id="IPR001680">
    <property type="entry name" value="WD40_rpt"/>
</dbReference>
<dbReference type="PANTHER" id="PTHR13831">
    <property type="entry name" value="MEMBER OF THE HIR1 FAMILY OF WD-REPEAT PROTEINS"/>
    <property type="match status" value="1"/>
</dbReference>
<dbReference type="PANTHER" id="PTHR13831:SF0">
    <property type="entry name" value="PROTEIN HIRA"/>
    <property type="match status" value="1"/>
</dbReference>
<dbReference type="Pfam" id="PF24105">
    <property type="entry name" value="Beta-prop_CAF1B_HIR1"/>
    <property type="match status" value="1"/>
</dbReference>
<dbReference type="Pfam" id="PF07569">
    <property type="entry name" value="Hira"/>
    <property type="match status" value="1"/>
</dbReference>
<dbReference type="Pfam" id="PF09453">
    <property type="entry name" value="HIRA_B"/>
    <property type="match status" value="1"/>
</dbReference>
<dbReference type="SMART" id="SM00320">
    <property type="entry name" value="WD40"/>
    <property type="match status" value="7"/>
</dbReference>
<dbReference type="SUPFAM" id="SSF50978">
    <property type="entry name" value="WD40 repeat-like"/>
    <property type="match status" value="2"/>
</dbReference>
<dbReference type="PROSITE" id="PS50082">
    <property type="entry name" value="WD_REPEATS_2"/>
    <property type="match status" value="4"/>
</dbReference>
<dbReference type="PROSITE" id="PS50294">
    <property type="entry name" value="WD_REPEATS_REGION"/>
    <property type="match status" value="1"/>
</dbReference>
<gene>
    <name type="primary">HIR1</name>
    <name type="ORF">AO090012000864</name>
</gene>
<sequence>MHIIKPVWLTHGGERKDFEVYSCDVSPDGSRLVTAAGDGYVRIWSTEAICNTNDPAVASKPKQLASMSNHSGTIHTVRFSPNGKYLASGADDKIVCIYTLDTNPPSHATTFGSNEAPPVENWRTVRRLIGHDNDVQDLGWSYDSSILVSVGLDSKVVVWSGHTFEKLKTISIHQSHVKGITFDPANKYFATASDDRTVRIFRFTSPAPNSTAHDQMNNFVLEQTISAPFANSPLTAYFRRCSWSPDGMHIAAANAVNGPVSSVAIINRGSWDGDINLIGHEAPVEVCAFSPRLYASQPVDKQAMDNQHGAQNLVTVIACAGGDKSLSIWITSNPRPIVVAQELAAKSLSDLAWSPDGKCLYATALDGTILAVRFEDGDLGYATAMEENEKSLTKFGTNRKGAGITETPDGLLLEEKSKAGEIKGVEGRMGALMGDDQADNITNEKPALLPSNAPTPARPSSPAPDAQKSQPNGTATPSAPEPEKPDPYQAKLERLKQRPTYTKDGKKRIAPLLVSGAGAAESSLPQARLMASVSNQVKADTPQSIVDLSKPFDGLPKGGLATLLFGNKRKLAQLEEDDDGHVEKRVALASQNGATPLLTNTPDGLLPARPQPAPTGQQPTPEFIRPAVTNPCMAMSQVRLAVPKVRNQILRAIDPNGKPTEPPSASGESSKSRVDVVFEARNPSAASLTGRAVDREPVRLTLFRGEQPLWQDFLPRTVLLVTGNQSMWAAACEDGSVYIWTPAGRRLVSALVLEAQPVILECNGPWILCISAVGMCYVWNVKHLSSPHPPVSLQPALDAAIHTLGAHPSAAPAITNARINSEGRIVVAMSNGEGYSYSPSMFTWQRISEPWWAVGSQYWNTTEAPVGNLQTADAQKDKDAKAAVSAGIIPFLERNTTSETLLRGRAYFLQRLIKVLLSREGYESFESSVSIAHLENRLAAALSLGAKEEFRLYLSMYAKRIGAEGLKMKVEELLKGLIGGLFEEDEAGTAQRLQENEQEDRNWRESSETLCGWPREVLLKEVILALGKHRDLQRVTVPYAKLLGVVDGESDVGDAMET</sequence>
<name>HIR1_ASPOR</name>
<proteinExistence type="inferred from homology"/>
<comment type="function">
    <text evidence="1">Required for replication-independent chromatin assembly and for the periodic repression of histone gene transcription during the cell cycle.</text>
</comment>
<comment type="subcellular location">
    <subcellularLocation>
        <location evidence="1">Nucleus</location>
    </subcellularLocation>
</comment>
<comment type="similarity">
    <text evidence="3">Belongs to the WD repeat HIR1 family.</text>
</comment>
<organism>
    <name type="scientific">Aspergillus oryzae (strain ATCC 42149 / RIB 40)</name>
    <name type="common">Yellow koji mold</name>
    <dbReference type="NCBI Taxonomy" id="510516"/>
    <lineage>
        <taxon>Eukaryota</taxon>
        <taxon>Fungi</taxon>
        <taxon>Dikarya</taxon>
        <taxon>Ascomycota</taxon>
        <taxon>Pezizomycotina</taxon>
        <taxon>Eurotiomycetes</taxon>
        <taxon>Eurotiomycetidae</taxon>
        <taxon>Eurotiales</taxon>
        <taxon>Aspergillaceae</taxon>
        <taxon>Aspergillus</taxon>
        <taxon>Aspergillus subgen. Circumdati</taxon>
    </lineage>
</organism>
<reference key="1">
    <citation type="journal article" date="2005" name="Nature">
        <title>Genome sequencing and analysis of Aspergillus oryzae.</title>
        <authorList>
            <person name="Machida M."/>
            <person name="Asai K."/>
            <person name="Sano M."/>
            <person name="Tanaka T."/>
            <person name="Kumagai T."/>
            <person name="Terai G."/>
            <person name="Kusumoto K."/>
            <person name="Arima T."/>
            <person name="Akita O."/>
            <person name="Kashiwagi Y."/>
            <person name="Abe K."/>
            <person name="Gomi K."/>
            <person name="Horiuchi H."/>
            <person name="Kitamoto K."/>
            <person name="Kobayashi T."/>
            <person name="Takeuchi M."/>
            <person name="Denning D.W."/>
            <person name="Galagan J.E."/>
            <person name="Nierman W.C."/>
            <person name="Yu J."/>
            <person name="Archer D.B."/>
            <person name="Bennett J.W."/>
            <person name="Bhatnagar D."/>
            <person name="Cleveland T.E."/>
            <person name="Fedorova N.D."/>
            <person name="Gotoh O."/>
            <person name="Horikawa H."/>
            <person name="Hosoyama A."/>
            <person name="Ichinomiya M."/>
            <person name="Igarashi R."/>
            <person name="Iwashita K."/>
            <person name="Juvvadi P.R."/>
            <person name="Kato M."/>
            <person name="Kato Y."/>
            <person name="Kin T."/>
            <person name="Kokubun A."/>
            <person name="Maeda H."/>
            <person name="Maeyama N."/>
            <person name="Maruyama J."/>
            <person name="Nagasaki H."/>
            <person name="Nakajima T."/>
            <person name="Oda K."/>
            <person name="Okada K."/>
            <person name="Paulsen I."/>
            <person name="Sakamoto K."/>
            <person name="Sawano T."/>
            <person name="Takahashi M."/>
            <person name="Takase K."/>
            <person name="Terabayashi Y."/>
            <person name="Wortman J.R."/>
            <person name="Yamada O."/>
            <person name="Yamagata Y."/>
            <person name="Anazawa H."/>
            <person name="Hata Y."/>
            <person name="Koide Y."/>
            <person name="Komori T."/>
            <person name="Koyama Y."/>
            <person name="Minetoki T."/>
            <person name="Suharnan S."/>
            <person name="Tanaka A."/>
            <person name="Isono K."/>
            <person name="Kuhara S."/>
            <person name="Ogasawara N."/>
            <person name="Kikuchi H."/>
        </authorList>
    </citation>
    <scope>NUCLEOTIDE SEQUENCE [LARGE SCALE GENOMIC DNA]</scope>
    <source>
        <strain>ATCC 42149 / RIB 40</strain>
    </source>
</reference>
<feature type="chain" id="PRO_0000286403" description="Protein HIR1">
    <location>
        <begin position="1"/>
        <end position="1058"/>
    </location>
</feature>
<feature type="repeat" description="WD 1">
    <location>
        <begin position="15"/>
        <end position="54"/>
    </location>
</feature>
<feature type="repeat" description="WD 2">
    <location>
        <begin position="69"/>
        <end position="108"/>
    </location>
</feature>
<feature type="repeat" description="WD 3">
    <location>
        <begin position="130"/>
        <end position="169"/>
    </location>
</feature>
<feature type="repeat" description="WD 4">
    <location>
        <begin position="172"/>
        <end position="211"/>
    </location>
</feature>
<feature type="repeat" description="WD 5">
    <location>
        <begin position="233"/>
        <end position="276"/>
    </location>
</feature>
<feature type="repeat" description="WD 6">
    <location>
        <begin position="279"/>
        <end position="339"/>
    </location>
</feature>
<feature type="repeat" description="WD 7">
    <location>
        <begin position="343"/>
        <end position="384"/>
    </location>
</feature>
<feature type="region of interest" description="Disordered" evidence="2">
    <location>
        <begin position="427"/>
        <end position="488"/>
    </location>
</feature>
<feature type="region of interest" description="Disordered" evidence="2">
    <location>
        <begin position="590"/>
        <end position="618"/>
    </location>
</feature>
<feature type="region of interest" description="Disordered" evidence="2">
    <location>
        <begin position="652"/>
        <end position="672"/>
    </location>
</feature>
<feature type="compositionally biased region" description="Polar residues" evidence="2">
    <location>
        <begin position="467"/>
        <end position="477"/>
    </location>
</feature>
<feature type="compositionally biased region" description="Polar residues" evidence="2">
    <location>
        <begin position="590"/>
        <end position="602"/>
    </location>
</feature>
<accession>Q2UBU2</accession>
<evidence type="ECO:0000250" key="1"/>
<evidence type="ECO:0000256" key="2">
    <source>
        <dbReference type="SAM" id="MobiDB-lite"/>
    </source>
</evidence>
<evidence type="ECO:0000305" key="3"/>
<keyword id="KW-0156">Chromatin regulator</keyword>
<keyword id="KW-0539">Nucleus</keyword>
<keyword id="KW-1185">Reference proteome</keyword>
<keyword id="KW-0677">Repeat</keyword>
<keyword id="KW-0678">Repressor</keyword>
<keyword id="KW-0804">Transcription</keyword>
<keyword id="KW-0805">Transcription regulation</keyword>
<keyword id="KW-0853">WD repeat</keyword>
<protein>
    <recommendedName>
        <fullName>Protein HIR1</fullName>
    </recommendedName>
</protein>